<dbReference type="EMBL" id="AJ223306">
    <property type="protein sequence ID" value="CAA11248.1"/>
    <property type="molecule type" value="mRNA"/>
</dbReference>
<dbReference type="EMBL" id="AF079800">
    <property type="protein sequence ID" value="AAC95011.1"/>
    <property type="molecule type" value="mRNA"/>
</dbReference>
<dbReference type="EMBL" id="AC008113">
    <property type="protein sequence ID" value="AAG28890.1"/>
    <property type="molecule type" value="Genomic_DNA"/>
</dbReference>
<dbReference type="EMBL" id="CP002684">
    <property type="protein sequence ID" value="AEE34689.1"/>
    <property type="molecule type" value="Genomic_DNA"/>
</dbReference>
<dbReference type="EMBL" id="AY050391">
    <property type="protein sequence ID" value="AAK91408.1"/>
    <property type="molecule type" value="mRNA"/>
</dbReference>
<dbReference type="EMBL" id="AY052269">
    <property type="protein sequence ID" value="AAK97739.1"/>
    <property type="molecule type" value="mRNA"/>
</dbReference>
<dbReference type="EMBL" id="AY097348">
    <property type="protein sequence ID" value="AAM19864.1"/>
    <property type="molecule type" value="mRNA"/>
</dbReference>
<dbReference type="PIR" id="T51847">
    <property type="entry name" value="T51847"/>
</dbReference>
<dbReference type="RefSeq" id="NP_176940.1">
    <property type="nucleotide sequence ID" value="NM_105442.3"/>
</dbReference>
<dbReference type="SMR" id="O49347"/>
<dbReference type="FunCoup" id="O49347">
    <property type="interactions" value="951"/>
</dbReference>
<dbReference type="STRING" id="3702.O49347"/>
<dbReference type="TCDB" id="3.E.2.2.3">
    <property type="family name" value="the photosynthetic reaction center (prc) family"/>
</dbReference>
<dbReference type="iPTMnet" id="O49347"/>
<dbReference type="PaxDb" id="3702-AT1G67740.1"/>
<dbReference type="EnsemblPlants" id="AT1G67740.1">
    <property type="protein sequence ID" value="AT1G67740.1"/>
    <property type="gene ID" value="AT1G67740"/>
</dbReference>
<dbReference type="GeneID" id="843099"/>
<dbReference type="Gramene" id="AT1G67740.1">
    <property type="protein sequence ID" value="AT1G67740.1"/>
    <property type="gene ID" value="AT1G67740"/>
</dbReference>
<dbReference type="KEGG" id="ath:AT1G67740"/>
<dbReference type="Araport" id="AT1G67740"/>
<dbReference type="TAIR" id="AT1G67740">
    <property type="gene designation" value="PSBY"/>
</dbReference>
<dbReference type="eggNOG" id="ENOG502QVGR">
    <property type="taxonomic scope" value="Eukaryota"/>
</dbReference>
<dbReference type="HOGENOM" id="CLU_122147_0_0_1"/>
<dbReference type="InParanoid" id="O49347"/>
<dbReference type="OMA" id="NQVNKMR"/>
<dbReference type="OrthoDB" id="2016024at2759"/>
<dbReference type="PhylomeDB" id="O49347"/>
<dbReference type="BioCyc" id="MetaCyc:AT1G67740-MONOMER"/>
<dbReference type="PRO" id="PR:O49347"/>
<dbReference type="Proteomes" id="UP000006548">
    <property type="component" value="Chromosome 1"/>
</dbReference>
<dbReference type="ExpressionAtlas" id="O49347">
    <property type="expression patterns" value="baseline and differential"/>
</dbReference>
<dbReference type="GO" id="GO:0009533">
    <property type="term" value="C:chloroplast stromal thylakoid"/>
    <property type="evidence" value="ECO:0000314"/>
    <property type="project" value="TAIR"/>
</dbReference>
<dbReference type="GO" id="GO:0009535">
    <property type="term" value="C:chloroplast thylakoid membrane"/>
    <property type="evidence" value="ECO:0007005"/>
    <property type="project" value="TAIR"/>
</dbReference>
<dbReference type="GO" id="GO:0009523">
    <property type="term" value="C:photosystem II"/>
    <property type="evidence" value="ECO:0000250"/>
    <property type="project" value="TAIR"/>
</dbReference>
<dbReference type="GO" id="GO:0030145">
    <property type="term" value="F:manganese ion binding"/>
    <property type="evidence" value="ECO:0007669"/>
    <property type="project" value="InterPro"/>
</dbReference>
<dbReference type="GO" id="GO:0045454">
    <property type="term" value="P:cell redox homeostasis"/>
    <property type="evidence" value="ECO:0000315"/>
    <property type="project" value="TAIR"/>
</dbReference>
<dbReference type="GO" id="GO:0010205">
    <property type="term" value="P:photoinhibition"/>
    <property type="evidence" value="ECO:0000315"/>
    <property type="project" value="TAIR"/>
</dbReference>
<dbReference type="GO" id="GO:0015979">
    <property type="term" value="P:photosynthesis"/>
    <property type="evidence" value="ECO:0007669"/>
    <property type="project" value="UniProtKB-KW"/>
</dbReference>
<dbReference type="HAMAP" id="MF_00717">
    <property type="entry name" value="PSII_PsbY"/>
    <property type="match status" value="1"/>
</dbReference>
<dbReference type="InterPro" id="IPR038760">
    <property type="entry name" value="PsbY_plant"/>
</dbReference>
<dbReference type="InterPro" id="IPR009388">
    <property type="entry name" value="PSII_PsbY"/>
</dbReference>
<dbReference type="PANTHER" id="PTHR34790">
    <property type="entry name" value="PHOTOSYSTEM II CORE COMPLEX PROTEINS PSBY, CHLOROPLASTIC"/>
    <property type="match status" value="1"/>
</dbReference>
<dbReference type="PANTHER" id="PTHR34790:SF1">
    <property type="entry name" value="PHOTOSYSTEM II CORE COMPLEX PROTEINS PSBY, CHLOROPLASTIC"/>
    <property type="match status" value="1"/>
</dbReference>
<dbReference type="Pfam" id="PF06298">
    <property type="entry name" value="PsbY"/>
    <property type="match status" value="2"/>
</dbReference>
<accession>O49347</accession>
<evidence type="ECO:0000250" key="1">
    <source>
        <dbReference type="UniProtKB" id="P73676"/>
    </source>
</evidence>
<evidence type="ECO:0000250" key="2">
    <source>
        <dbReference type="UniProtKB" id="Q8DKM3"/>
    </source>
</evidence>
<evidence type="ECO:0000255" key="3"/>
<evidence type="ECO:0000256" key="4">
    <source>
        <dbReference type="SAM" id="MobiDB-lite"/>
    </source>
</evidence>
<evidence type="ECO:0000269" key="5">
    <source>
    </source>
</evidence>
<evidence type="ECO:0000305" key="6"/>
<evidence type="ECO:0000305" key="7">
    <source>
    </source>
</evidence>
<sequence>MAAAMATATKCMSLNPSPPKLQNQTKSKPFISLPTPPKPNVSLAVTSTALAGAVFSSLSYSEPALAIQQIAQLAAANASSDNRGLALLLPIVPAIAWVLYNILQPAINQVNKMRESKGIVVGLGIGGGLAASGLLTPPPEAYAAAEAAAASSDSRGQLLLIVVTPALLWVLYNILQPALNQINKMRSGD</sequence>
<name>PSBY_ARATH</name>
<proteinExistence type="evidence at protein level"/>
<organism>
    <name type="scientific">Arabidopsis thaliana</name>
    <name type="common">Mouse-ear cress</name>
    <dbReference type="NCBI Taxonomy" id="3702"/>
    <lineage>
        <taxon>Eukaryota</taxon>
        <taxon>Viridiplantae</taxon>
        <taxon>Streptophyta</taxon>
        <taxon>Embryophyta</taxon>
        <taxon>Tracheophyta</taxon>
        <taxon>Spermatophyta</taxon>
        <taxon>Magnoliopsida</taxon>
        <taxon>eudicotyledons</taxon>
        <taxon>Gunneridae</taxon>
        <taxon>Pentapetalae</taxon>
        <taxon>rosids</taxon>
        <taxon>malvids</taxon>
        <taxon>Brassicales</taxon>
        <taxon>Brassicaceae</taxon>
        <taxon>Camelineae</taxon>
        <taxon>Arabidopsis</taxon>
    </lineage>
</organism>
<gene>
    <name type="primary">PSBY</name>
    <name type="ordered locus">At1g67740</name>
    <name type="ORF">F12A21.13</name>
</gene>
<feature type="transit peptide" description="Chloroplast" evidence="6">
    <location>
        <begin position="1"/>
        <end position="74"/>
    </location>
</feature>
<feature type="chain" id="PRO_0000029610" description="Photosystem II reaction center protein PsbY-1, chloroplastic">
    <location>
        <begin position="75"/>
        <end position="117"/>
    </location>
</feature>
<feature type="propeptide" id="PRO_0000029611" evidence="6">
    <location>
        <begin position="118"/>
        <end position="143"/>
    </location>
</feature>
<feature type="chain" id="PRO_0000029612" description="Photosystem II reaction center protein PsbY-2, chloroplastic">
    <location>
        <begin position="144"/>
        <end position="189"/>
    </location>
</feature>
<feature type="topological domain" description="Lumenal" evidence="7">
    <location>
        <begin position="75"/>
        <end position="83"/>
    </location>
</feature>
<feature type="transmembrane region" description="Helical" evidence="3">
    <location>
        <begin position="84"/>
        <end position="104"/>
    </location>
</feature>
<feature type="topological domain" description="Stromal" evidence="7">
    <location>
        <begin position="105"/>
        <end position="117"/>
    </location>
</feature>
<feature type="transmembrane region" description="Helical" evidence="3">
    <location>
        <begin position="118"/>
        <end position="138"/>
    </location>
</feature>
<feature type="topological domain" description="Lumenal" evidence="7">
    <location>
        <begin position="139"/>
        <end position="157"/>
    </location>
</feature>
<feature type="transmembrane region" description="Helical" evidence="3">
    <location>
        <begin position="158"/>
        <end position="178"/>
    </location>
</feature>
<feature type="topological domain" description="Stromal" evidence="7">
    <location>
        <begin position="179"/>
        <end position="189"/>
    </location>
</feature>
<feature type="region of interest" description="Disordered" evidence="4">
    <location>
        <begin position="1"/>
        <end position="24"/>
    </location>
</feature>
<feature type="compositionally biased region" description="Polar residues" evidence="4">
    <location>
        <begin position="10"/>
        <end position="24"/>
    </location>
</feature>
<protein>
    <recommendedName>
        <fullName>Photosystem II reaction center proteins PsbY, chloroplastic</fullName>
    </recommendedName>
    <alternativeName>
        <fullName>L-arginine-metabolizing enzyme</fullName>
        <shortName>L-AME</shortName>
    </alternativeName>
    <component>
        <recommendedName>
            <fullName>Photosystem II reaction center protein PsbY-1, chloroplastic</fullName>
        </recommendedName>
        <alternativeName>
            <fullName>PsbY-A1</fullName>
        </alternativeName>
    </component>
    <component>
        <recommendedName>
            <fullName>Photosystem II reaction center protein PsbY-2, chloroplastic</fullName>
        </recommendedName>
        <alternativeName>
            <fullName>PsbY-A2</fullName>
        </alternativeName>
    </component>
</protein>
<comment type="function">
    <text evidence="2">Loosely associated component of the core of photosystem II (PSII), it is not always seen in crystals. PSII is a light-driven water plastoquinone oxidoreductase, using light energy to abstract electrons from H(2)O, generating a proton gradient subsequently used for ATP formation.</text>
</comment>
<comment type="subcellular location">
    <subcellularLocation>
        <location evidence="7">Plastid</location>
        <location evidence="7">Chloroplast thylakoid membrane</location>
        <topology>Multi-pass membrane protein</topology>
    </subcellularLocation>
    <text evidence="5">Imports into spinach thylakoid membranes.</text>
</comment>
<comment type="miscellaneous">
    <text evidence="7">The central hydrophobic segment (residues 118-138) does not form a membrane-spanning region but could serve as a targeting signal for processing of the precursor in the thylakoid membrane.</text>
</comment>
<comment type="similarity">
    <text evidence="6">Belongs to the PsbY family.</text>
</comment>
<comment type="caution">
    <text evidence="1 7">Was originally thought to be a manganese-binding polypeptide with L-arginine metabolizing activity, with a possible role in the function of the CaMn4O5-cluster in oxygen-evolving PSII (PubMed:9829828). However it is not essential for PSII activity in cyanobacteria and does not furnish ligands for the CaMn4O5 cluster (By similarity).</text>
</comment>
<reference key="1">
    <citation type="journal article" date="1998" name="FEBS Lett.">
        <title>An Arabidopsis cDNA encodes an apparent polyprotein of two non-identical thylakoid membrane proteins that are associated with photosystem II and homologous to algal ycf32 open reading frames.</title>
        <authorList>
            <person name="Mant A."/>
            <person name="Robinson C."/>
        </authorList>
    </citation>
    <scope>NUCLEOTIDE SEQUENCE [MRNA]</scope>
    <source>
        <strain>cv. Columbia</strain>
    </source>
</reference>
<reference key="2">
    <citation type="journal article" date="1998" name="Mol. Gen. Genet.">
        <title>PsbY, a novel manganese-binding, low-molecular-mass protein associated with photosystem II.</title>
        <authorList>
            <person name="Gau A.E."/>
            <person name="Thole H.H."/>
            <person name="Sokolenko A."/>
            <person name="Altschmied L."/>
            <person name="Herrmann R.G."/>
            <person name="Pistorius E.K."/>
        </authorList>
    </citation>
    <scope>NUCLEOTIDE SEQUENCE [MRNA]</scope>
    <scope>CHLOROPLAST IMPORT</scope>
    <scope>SUBCELLULAR LOCATION</scope>
    <scope>TOPOLOGY</scope>
</reference>
<reference key="3">
    <citation type="journal article" date="2000" name="Nature">
        <title>Sequence and analysis of chromosome 1 of the plant Arabidopsis thaliana.</title>
        <authorList>
            <person name="Theologis A."/>
            <person name="Ecker J.R."/>
            <person name="Palm C.J."/>
            <person name="Federspiel N.A."/>
            <person name="Kaul S."/>
            <person name="White O."/>
            <person name="Alonso J."/>
            <person name="Altafi H."/>
            <person name="Araujo R."/>
            <person name="Bowman C.L."/>
            <person name="Brooks S.Y."/>
            <person name="Buehler E."/>
            <person name="Chan A."/>
            <person name="Chao Q."/>
            <person name="Chen H."/>
            <person name="Cheuk R.F."/>
            <person name="Chin C.W."/>
            <person name="Chung M.K."/>
            <person name="Conn L."/>
            <person name="Conway A.B."/>
            <person name="Conway A.R."/>
            <person name="Creasy T.H."/>
            <person name="Dewar K."/>
            <person name="Dunn P."/>
            <person name="Etgu P."/>
            <person name="Feldblyum T.V."/>
            <person name="Feng J.-D."/>
            <person name="Fong B."/>
            <person name="Fujii C.Y."/>
            <person name="Gill J.E."/>
            <person name="Goldsmith A.D."/>
            <person name="Haas B."/>
            <person name="Hansen N.F."/>
            <person name="Hughes B."/>
            <person name="Huizar L."/>
            <person name="Hunter J.L."/>
            <person name="Jenkins J."/>
            <person name="Johnson-Hopson C."/>
            <person name="Khan S."/>
            <person name="Khaykin E."/>
            <person name="Kim C.J."/>
            <person name="Koo H.L."/>
            <person name="Kremenetskaia I."/>
            <person name="Kurtz D.B."/>
            <person name="Kwan A."/>
            <person name="Lam B."/>
            <person name="Langin-Hooper S."/>
            <person name="Lee A."/>
            <person name="Lee J.M."/>
            <person name="Lenz C.A."/>
            <person name="Li J.H."/>
            <person name="Li Y.-P."/>
            <person name="Lin X."/>
            <person name="Liu S.X."/>
            <person name="Liu Z.A."/>
            <person name="Luros J.S."/>
            <person name="Maiti R."/>
            <person name="Marziali A."/>
            <person name="Militscher J."/>
            <person name="Miranda M."/>
            <person name="Nguyen M."/>
            <person name="Nierman W.C."/>
            <person name="Osborne B.I."/>
            <person name="Pai G."/>
            <person name="Peterson J."/>
            <person name="Pham P.K."/>
            <person name="Rizzo M."/>
            <person name="Rooney T."/>
            <person name="Rowley D."/>
            <person name="Sakano H."/>
            <person name="Salzberg S.L."/>
            <person name="Schwartz J.R."/>
            <person name="Shinn P."/>
            <person name="Southwick A.M."/>
            <person name="Sun H."/>
            <person name="Tallon L.J."/>
            <person name="Tambunga G."/>
            <person name="Toriumi M.J."/>
            <person name="Town C.D."/>
            <person name="Utterback T."/>
            <person name="Van Aken S."/>
            <person name="Vaysberg M."/>
            <person name="Vysotskaia V.S."/>
            <person name="Walker M."/>
            <person name="Wu D."/>
            <person name="Yu G."/>
            <person name="Fraser C.M."/>
            <person name="Venter J.C."/>
            <person name="Davis R.W."/>
        </authorList>
    </citation>
    <scope>NUCLEOTIDE SEQUENCE [LARGE SCALE GENOMIC DNA]</scope>
    <source>
        <strain>cv. Columbia</strain>
    </source>
</reference>
<reference key="4">
    <citation type="journal article" date="2017" name="Plant J.">
        <title>Araport11: a complete reannotation of the Arabidopsis thaliana reference genome.</title>
        <authorList>
            <person name="Cheng C.Y."/>
            <person name="Krishnakumar V."/>
            <person name="Chan A.P."/>
            <person name="Thibaud-Nissen F."/>
            <person name="Schobel S."/>
            <person name="Town C.D."/>
        </authorList>
    </citation>
    <scope>GENOME REANNOTATION</scope>
    <source>
        <strain>cv. Columbia</strain>
    </source>
</reference>
<reference key="5">
    <citation type="journal article" date="2003" name="Science">
        <title>Empirical analysis of transcriptional activity in the Arabidopsis genome.</title>
        <authorList>
            <person name="Yamada K."/>
            <person name="Lim J."/>
            <person name="Dale J.M."/>
            <person name="Chen H."/>
            <person name="Shinn P."/>
            <person name="Palm C.J."/>
            <person name="Southwick A.M."/>
            <person name="Wu H.C."/>
            <person name="Kim C.J."/>
            <person name="Nguyen M."/>
            <person name="Pham P.K."/>
            <person name="Cheuk R.F."/>
            <person name="Karlin-Newmann G."/>
            <person name="Liu S.X."/>
            <person name="Lam B."/>
            <person name="Sakano H."/>
            <person name="Wu T."/>
            <person name="Yu G."/>
            <person name="Miranda M."/>
            <person name="Quach H.L."/>
            <person name="Tripp M."/>
            <person name="Chang C.H."/>
            <person name="Lee J.M."/>
            <person name="Toriumi M.J."/>
            <person name="Chan M.M."/>
            <person name="Tang C.C."/>
            <person name="Onodera C.S."/>
            <person name="Deng J.M."/>
            <person name="Akiyama K."/>
            <person name="Ansari Y."/>
            <person name="Arakawa T."/>
            <person name="Banh J."/>
            <person name="Banno F."/>
            <person name="Bowser L."/>
            <person name="Brooks S.Y."/>
            <person name="Carninci P."/>
            <person name="Chao Q."/>
            <person name="Choy N."/>
            <person name="Enju A."/>
            <person name="Goldsmith A.D."/>
            <person name="Gurjal M."/>
            <person name="Hansen N.F."/>
            <person name="Hayashizaki Y."/>
            <person name="Johnson-Hopson C."/>
            <person name="Hsuan V.W."/>
            <person name="Iida K."/>
            <person name="Karnes M."/>
            <person name="Khan S."/>
            <person name="Koesema E."/>
            <person name="Ishida J."/>
            <person name="Jiang P.X."/>
            <person name="Jones T."/>
            <person name="Kawai J."/>
            <person name="Kamiya A."/>
            <person name="Meyers C."/>
            <person name="Nakajima M."/>
            <person name="Narusaka M."/>
            <person name="Seki M."/>
            <person name="Sakurai T."/>
            <person name="Satou M."/>
            <person name="Tamse R."/>
            <person name="Vaysberg M."/>
            <person name="Wallender E.K."/>
            <person name="Wong C."/>
            <person name="Yamamura Y."/>
            <person name="Yuan S."/>
            <person name="Shinozaki K."/>
            <person name="Davis R.W."/>
            <person name="Theologis A."/>
            <person name="Ecker J.R."/>
        </authorList>
    </citation>
    <scope>NUCLEOTIDE SEQUENCE [LARGE SCALE MRNA]</scope>
    <source>
        <strain>cv. Columbia</strain>
    </source>
</reference>
<keyword id="KW-0150">Chloroplast</keyword>
<keyword id="KW-0464">Manganese</keyword>
<keyword id="KW-0472">Membrane</keyword>
<keyword id="KW-0602">Photosynthesis</keyword>
<keyword id="KW-0604">Photosystem II</keyword>
<keyword id="KW-0934">Plastid</keyword>
<keyword id="KW-1185">Reference proteome</keyword>
<keyword id="KW-0677">Repeat</keyword>
<keyword id="KW-0793">Thylakoid</keyword>
<keyword id="KW-0809">Transit peptide</keyword>
<keyword id="KW-0812">Transmembrane</keyword>
<keyword id="KW-1133">Transmembrane helix</keyword>